<proteinExistence type="inferred from homology"/>
<gene>
    <name evidence="1" type="primary">ilvC</name>
    <name type="ordered locus">DSY1368</name>
</gene>
<keyword id="KW-0028">Amino-acid biosynthesis</keyword>
<keyword id="KW-0100">Branched-chain amino acid biosynthesis</keyword>
<keyword id="KW-0460">Magnesium</keyword>
<keyword id="KW-0479">Metal-binding</keyword>
<keyword id="KW-0521">NADP</keyword>
<keyword id="KW-0560">Oxidoreductase</keyword>
<keyword id="KW-1185">Reference proteome</keyword>
<protein>
    <recommendedName>
        <fullName evidence="1">Ketol-acid reductoisomerase (NADP(+))</fullName>
        <shortName evidence="1">KARI</shortName>
        <ecNumber evidence="1">1.1.1.86</ecNumber>
    </recommendedName>
    <alternativeName>
        <fullName evidence="1">Acetohydroxy-acid isomeroreductase</fullName>
        <shortName evidence="1">AHIR</shortName>
    </alternativeName>
    <alternativeName>
        <fullName evidence="1">Alpha-keto-beta-hydroxylacyl reductoisomerase</fullName>
    </alternativeName>
    <alternativeName>
        <fullName evidence="1">Ketol-acid reductoisomerase type 1</fullName>
    </alternativeName>
    <alternativeName>
        <fullName evidence="1">Ketol-acid reductoisomerase type I</fullName>
    </alternativeName>
</protein>
<evidence type="ECO:0000255" key="1">
    <source>
        <dbReference type="HAMAP-Rule" id="MF_00435"/>
    </source>
</evidence>
<evidence type="ECO:0000255" key="2">
    <source>
        <dbReference type="PROSITE-ProRule" id="PRU01197"/>
    </source>
</evidence>
<evidence type="ECO:0000255" key="3">
    <source>
        <dbReference type="PROSITE-ProRule" id="PRU01198"/>
    </source>
</evidence>
<reference key="1">
    <citation type="journal article" date="2006" name="J. Bacteriol.">
        <title>Complete genome sequence of the dehalorespiring bacterium Desulfitobacterium hafniense Y51 and comparison with Dehalococcoides ethenogenes 195.</title>
        <authorList>
            <person name="Nonaka H."/>
            <person name="Keresztes G."/>
            <person name="Shinoda Y."/>
            <person name="Ikenaga Y."/>
            <person name="Abe M."/>
            <person name="Naito K."/>
            <person name="Inatomi K."/>
            <person name="Furukawa K."/>
            <person name="Inui M."/>
            <person name="Yukawa H."/>
        </authorList>
    </citation>
    <scope>NUCLEOTIDE SEQUENCE [LARGE SCALE GENOMIC DNA]</scope>
    <source>
        <strain>Y51</strain>
    </source>
</reference>
<name>ILVC_DESHY</name>
<dbReference type="EC" id="1.1.1.86" evidence="1"/>
<dbReference type="EMBL" id="AP008230">
    <property type="protein sequence ID" value="BAE83157.1"/>
    <property type="molecule type" value="Genomic_DNA"/>
</dbReference>
<dbReference type="RefSeq" id="WP_005816729.1">
    <property type="nucleotide sequence ID" value="NC_007907.1"/>
</dbReference>
<dbReference type="SMR" id="Q24XT5"/>
<dbReference type="STRING" id="138119.DSY1368"/>
<dbReference type="KEGG" id="dsy:DSY1368"/>
<dbReference type="eggNOG" id="COG0059">
    <property type="taxonomic scope" value="Bacteria"/>
</dbReference>
<dbReference type="HOGENOM" id="CLU_033821_0_1_9"/>
<dbReference type="UniPathway" id="UPA00047">
    <property type="reaction ID" value="UER00056"/>
</dbReference>
<dbReference type="UniPathway" id="UPA00049">
    <property type="reaction ID" value="UER00060"/>
</dbReference>
<dbReference type="Proteomes" id="UP000001946">
    <property type="component" value="Chromosome"/>
</dbReference>
<dbReference type="GO" id="GO:0005829">
    <property type="term" value="C:cytosol"/>
    <property type="evidence" value="ECO:0007669"/>
    <property type="project" value="TreeGrafter"/>
</dbReference>
<dbReference type="GO" id="GO:0004455">
    <property type="term" value="F:ketol-acid reductoisomerase activity"/>
    <property type="evidence" value="ECO:0007669"/>
    <property type="project" value="UniProtKB-UniRule"/>
</dbReference>
<dbReference type="GO" id="GO:0000287">
    <property type="term" value="F:magnesium ion binding"/>
    <property type="evidence" value="ECO:0007669"/>
    <property type="project" value="UniProtKB-UniRule"/>
</dbReference>
<dbReference type="GO" id="GO:0050661">
    <property type="term" value="F:NADP binding"/>
    <property type="evidence" value="ECO:0007669"/>
    <property type="project" value="InterPro"/>
</dbReference>
<dbReference type="GO" id="GO:0009097">
    <property type="term" value="P:isoleucine biosynthetic process"/>
    <property type="evidence" value="ECO:0007669"/>
    <property type="project" value="UniProtKB-UniRule"/>
</dbReference>
<dbReference type="GO" id="GO:0009099">
    <property type="term" value="P:L-valine biosynthetic process"/>
    <property type="evidence" value="ECO:0007669"/>
    <property type="project" value="UniProtKB-UniRule"/>
</dbReference>
<dbReference type="FunFam" id="3.40.50.720:FF:000023">
    <property type="entry name" value="Ketol-acid reductoisomerase (NADP(+))"/>
    <property type="match status" value="1"/>
</dbReference>
<dbReference type="Gene3D" id="6.10.240.10">
    <property type="match status" value="1"/>
</dbReference>
<dbReference type="Gene3D" id="3.40.50.720">
    <property type="entry name" value="NAD(P)-binding Rossmann-like Domain"/>
    <property type="match status" value="1"/>
</dbReference>
<dbReference type="HAMAP" id="MF_00435">
    <property type="entry name" value="IlvC"/>
    <property type="match status" value="1"/>
</dbReference>
<dbReference type="InterPro" id="IPR008927">
    <property type="entry name" value="6-PGluconate_DH-like_C_sf"/>
</dbReference>
<dbReference type="InterPro" id="IPR013023">
    <property type="entry name" value="KARI"/>
</dbReference>
<dbReference type="InterPro" id="IPR000506">
    <property type="entry name" value="KARI_C"/>
</dbReference>
<dbReference type="InterPro" id="IPR013116">
    <property type="entry name" value="KARI_N"/>
</dbReference>
<dbReference type="InterPro" id="IPR014359">
    <property type="entry name" value="KARI_prok"/>
</dbReference>
<dbReference type="InterPro" id="IPR036291">
    <property type="entry name" value="NAD(P)-bd_dom_sf"/>
</dbReference>
<dbReference type="NCBIfam" id="TIGR00465">
    <property type="entry name" value="ilvC"/>
    <property type="match status" value="1"/>
</dbReference>
<dbReference type="NCBIfam" id="NF004017">
    <property type="entry name" value="PRK05479.1"/>
    <property type="match status" value="1"/>
</dbReference>
<dbReference type="NCBIfam" id="NF009940">
    <property type="entry name" value="PRK13403.1"/>
    <property type="match status" value="1"/>
</dbReference>
<dbReference type="PANTHER" id="PTHR21371">
    <property type="entry name" value="KETOL-ACID REDUCTOISOMERASE, MITOCHONDRIAL"/>
    <property type="match status" value="1"/>
</dbReference>
<dbReference type="PANTHER" id="PTHR21371:SF1">
    <property type="entry name" value="KETOL-ACID REDUCTOISOMERASE, MITOCHONDRIAL"/>
    <property type="match status" value="1"/>
</dbReference>
<dbReference type="Pfam" id="PF01450">
    <property type="entry name" value="KARI_C"/>
    <property type="match status" value="1"/>
</dbReference>
<dbReference type="Pfam" id="PF07991">
    <property type="entry name" value="KARI_N"/>
    <property type="match status" value="1"/>
</dbReference>
<dbReference type="PIRSF" id="PIRSF000116">
    <property type="entry name" value="IlvC_gammaproteo"/>
    <property type="match status" value="1"/>
</dbReference>
<dbReference type="SUPFAM" id="SSF48179">
    <property type="entry name" value="6-phosphogluconate dehydrogenase C-terminal domain-like"/>
    <property type="match status" value="1"/>
</dbReference>
<dbReference type="SUPFAM" id="SSF51735">
    <property type="entry name" value="NAD(P)-binding Rossmann-fold domains"/>
    <property type="match status" value="1"/>
</dbReference>
<dbReference type="PROSITE" id="PS51851">
    <property type="entry name" value="KARI_C"/>
    <property type="match status" value="1"/>
</dbReference>
<dbReference type="PROSITE" id="PS51850">
    <property type="entry name" value="KARI_N"/>
    <property type="match status" value="1"/>
</dbReference>
<sequence>MAKMYYDSDASLELLQGKTIAVMGYGSQGHAQAQNLKDSGLNVVIGLRADSRRWKQAEAAGLKVATVAEAAAQADLIQILLPDERQASVYEKEIKPHLTAGKCLVFSHGFNIHFGQIVPPADVDVFMVAPKSPGHLVRRTYEEGAGVPGLIAVHQDASGRAYDLALAYAKGIGCTRAGVLETTFKEETETDLFGEQAVLCGGVSELIRAGFDTLVEAGYQPESAYFECLHELKLIVDLIYEGGISRMRYSISDTAEYGDMMIGKRIITDETRKEMKKVLAEIQDGTFAKNWLLENQINRPSFNAIERKDAEHPIEKVGAELRAMMPFIKKPGE</sequence>
<feature type="chain" id="PRO_0000252757" description="Ketol-acid reductoisomerase (NADP(+))">
    <location>
        <begin position="1"/>
        <end position="333"/>
    </location>
</feature>
<feature type="domain" description="KARI N-terminal Rossmann" evidence="2">
    <location>
        <begin position="2"/>
        <end position="182"/>
    </location>
</feature>
<feature type="domain" description="KARI C-terminal knotted" evidence="3">
    <location>
        <begin position="183"/>
        <end position="328"/>
    </location>
</feature>
<feature type="active site" evidence="1">
    <location>
        <position position="108"/>
    </location>
</feature>
<feature type="binding site" evidence="1">
    <location>
        <begin position="25"/>
        <end position="28"/>
    </location>
    <ligand>
        <name>NADP(+)</name>
        <dbReference type="ChEBI" id="CHEBI:58349"/>
    </ligand>
</feature>
<feature type="binding site" evidence="1">
    <location>
        <position position="48"/>
    </location>
    <ligand>
        <name>NADP(+)</name>
        <dbReference type="ChEBI" id="CHEBI:58349"/>
    </ligand>
</feature>
<feature type="binding site" evidence="1">
    <location>
        <position position="51"/>
    </location>
    <ligand>
        <name>NADP(+)</name>
        <dbReference type="ChEBI" id="CHEBI:58349"/>
    </ligand>
</feature>
<feature type="binding site" evidence="1">
    <location>
        <begin position="83"/>
        <end position="86"/>
    </location>
    <ligand>
        <name>NADP(+)</name>
        <dbReference type="ChEBI" id="CHEBI:58349"/>
    </ligand>
</feature>
<feature type="binding site" evidence="1">
    <location>
        <position position="134"/>
    </location>
    <ligand>
        <name>NADP(+)</name>
        <dbReference type="ChEBI" id="CHEBI:58349"/>
    </ligand>
</feature>
<feature type="binding site" evidence="1">
    <location>
        <position position="191"/>
    </location>
    <ligand>
        <name>Mg(2+)</name>
        <dbReference type="ChEBI" id="CHEBI:18420"/>
        <label>1</label>
    </ligand>
</feature>
<feature type="binding site" evidence="1">
    <location>
        <position position="191"/>
    </location>
    <ligand>
        <name>Mg(2+)</name>
        <dbReference type="ChEBI" id="CHEBI:18420"/>
        <label>2</label>
    </ligand>
</feature>
<feature type="binding site" evidence="1">
    <location>
        <position position="195"/>
    </location>
    <ligand>
        <name>Mg(2+)</name>
        <dbReference type="ChEBI" id="CHEBI:18420"/>
        <label>1</label>
    </ligand>
</feature>
<feature type="binding site" evidence="1">
    <location>
        <position position="227"/>
    </location>
    <ligand>
        <name>Mg(2+)</name>
        <dbReference type="ChEBI" id="CHEBI:18420"/>
        <label>2</label>
    </ligand>
</feature>
<feature type="binding site" evidence="1">
    <location>
        <position position="231"/>
    </location>
    <ligand>
        <name>Mg(2+)</name>
        <dbReference type="ChEBI" id="CHEBI:18420"/>
        <label>2</label>
    </ligand>
</feature>
<feature type="binding site" evidence="1">
    <location>
        <position position="252"/>
    </location>
    <ligand>
        <name>substrate</name>
    </ligand>
</feature>
<accession>Q24XT5</accession>
<comment type="function">
    <text evidence="1">Involved in the biosynthesis of branched-chain amino acids (BCAA). Catalyzes an alkyl-migration followed by a ketol-acid reduction of (S)-2-acetolactate (S2AL) to yield (R)-2,3-dihydroxy-isovalerate. In the isomerase reaction, S2AL is rearranged via a Mg-dependent methyl migration to produce 3-hydroxy-3-methyl-2-ketobutyrate (HMKB). In the reductase reaction, this 2-ketoacid undergoes a metal-dependent reduction by NADPH to yield (R)-2,3-dihydroxy-isovalerate.</text>
</comment>
<comment type="catalytic activity">
    <reaction evidence="1">
        <text>(2R)-2,3-dihydroxy-3-methylbutanoate + NADP(+) = (2S)-2-acetolactate + NADPH + H(+)</text>
        <dbReference type="Rhea" id="RHEA:22068"/>
        <dbReference type="ChEBI" id="CHEBI:15378"/>
        <dbReference type="ChEBI" id="CHEBI:49072"/>
        <dbReference type="ChEBI" id="CHEBI:57783"/>
        <dbReference type="ChEBI" id="CHEBI:58349"/>
        <dbReference type="ChEBI" id="CHEBI:58476"/>
        <dbReference type="EC" id="1.1.1.86"/>
    </reaction>
</comment>
<comment type="catalytic activity">
    <reaction evidence="1">
        <text>(2R,3R)-2,3-dihydroxy-3-methylpentanoate + NADP(+) = (S)-2-ethyl-2-hydroxy-3-oxobutanoate + NADPH + H(+)</text>
        <dbReference type="Rhea" id="RHEA:13493"/>
        <dbReference type="ChEBI" id="CHEBI:15378"/>
        <dbReference type="ChEBI" id="CHEBI:49256"/>
        <dbReference type="ChEBI" id="CHEBI:49258"/>
        <dbReference type="ChEBI" id="CHEBI:57783"/>
        <dbReference type="ChEBI" id="CHEBI:58349"/>
        <dbReference type="EC" id="1.1.1.86"/>
    </reaction>
</comment>
<comment type="cofactor">
    <cofactor evidence="1">
        <name>Mg(2+)</name>
        <dbReference type="ChEBI" id="CHEBI:18420"/>
    </cofactor>
    <text evidence="1">Binds 2 magnesium ions per subunit.</text>
</comment>
<comment type="pathway">
    <text evidence="1">Amino-acid biosynthesis; L-isoleucine biosynthesis; L-isoleucine from 2-oxobutanoate: step 2/4.</text>
</comment>
<comment type="pathway">
    <text evidence="1">Amino-acid biosynthesis; L-valine biosynthesis; L-valine from pyruvate: step 2/4.</text>
</comment>
<comment type="similarity">
    <text evidence="1">Belongs to the ketol-acid reductoisomerase family.</text>
</comment>
<organism>
    <name type="scientific">Desulfitobacterium hafniense (strain Y51)</name>
    <dbReference type="NCBI Taxonomy" id="138119"/>
    <lineage>
        <taxon>Bacteria</taxon>
        <taxon>Bacillati</taxon>
        <taxon>Bacillota</taxon>
        <taxon>Clostridia</taxon>
        <taxon>Eubacteriales</taxon>
        <taxon>Desulfitobacteriaceae</taxon>
        <taxon>Desulfitobacterium</taxon>
    </lineage>
</organism>